<evidence type="ECO:0000250" key="1"/>
<evidence type="ECO:0000250" key="2">
    <source>
        <dbReference type="UniProtKB" id="P19456"/>
    </source>
</evidence>
<evidence type="ECO:0000250" key="3">
    <source>
        <dbReference type="UniProtKB" id="P20649"/>
    </source>
</evidence>
<evidence type="ECO:0000255" key="4"/>
<evidence type="ECO:0000269" key="5">
    <source>
    </source>
</evidence>
<evidence type="ECO:0000305" key="6"/>
<name>PMA9_ARATH</name>
<sequence length="954" mass="105208">MAGNKDSSWDDIKNEGIDLEKIPIEEVLTQLRCTREGLTSDEGQTRLEIFGPNKLEEKKENKVLKFLGFMWNPLSWVMELAAIMAIALANGGGRPPDWQDFVGITVLLIINSTISFIEENNAGNAAAALMAGLAPKTKVLRDGKWSEQEAAILVPGDIISIKLGDIVPADGRLLDGDPLKIDQSALTGESLPVTKHPGQEVYSGSTCKQGELEAVVIATGVHTFFGKAAHLVDSTNQEGHFQKVLTAIGNFCICSIAIGMLIEIVVMYPIQKRAYRDGIDNLLVLLIGGIPIAMPTVLSVTMAIGSHRLSQQGAITKRMTAIEEMAGMDVLCSDKTGTLTLNKLTVDKSMVEVFVKDLDKDQLLVNAARASRVENQDAIDACIVGMLGDPREAREGITEVHFFPFNPVDKRTAITYIDANGNWHRVSKGAPEQIIELCNLREDASKRAHDIIDKFADRGLRSLAVGRQTVSEKDKNSPGEPWQFLGLLPLFDPPRHDSAETIRRALDLGVNVKMITGDQLAIGKETGRRLGMGTNMYPSSALLGQDKDESIASLPVDELIEKADGFAGVFPEHKYEIVKRLQEMKHICGMTGDGVNDAPALKRADIGIAVADATDAARSASDIVLTEPGLSVIVSAVLTSRAIFQRMKNYTIYAVSITIRIVMGFMLLALIWKFDFSPFMVLIVAILNDGTIMTISKDRVKPSPLPDSWKLKEIFATGVVLGTYLAVMTVVFFWAAESTDFFSAKFGVRSISGNPHELTAAVYLQVSIVSQALIFVTRSRSWSYVERPGFWLISAFFMAQLIATLIAVYANWNFARIRGIGWGWAGVIWLYSIVFYIPLDILKFIIRYSLSGRAWDNVIENKTAFTSKKDYGKGEREAQWAQAQRTLHGLQPAQTSDMFNDKSTYRELSEIADQAKRRAEVARLRERHTLKGHVESVVKQKGLDIEAIQQHYTL</sequence>
<keyword id="KW-0025">Alternative splicing</keyword>
<keyword id="KW-0067">ATP-binding</keyword>
<keyword id="KW-0375">Hydrogen ion transport</keyword>
<keyword id="KW-0406">Ion transport</keyword>
<keyword id="KW-0460">Magnesium</keyword>
<keyword id="KW-0472">Membrane</keyword>
<keyword id="KW-0479">Metal-binding</keyword>
<keyword id="KW-0547">Nucleotide-binding</keyword>
<keyword id="KW-0597">Phosphoprotein</keyword>
<keyword id="KW-1185">Reference proteome</keyword>
<keyword id="KW-1278">Translocase</keyword>
<keyword id="KW-0812">Transmembrane</keyword>
<keyword id="KW-1133">Transmembrane helix</keyword>
<keyword id="KW-0813">Transport</keyword>
<gene>
    <name type="primary">AHA9</name>
    <name type="ordered locus">At1g80660</name>
    <name type="ORF">F23A5.1</name>
    <name type="ORF">T21F11.1</name>
</gene>
<reference key="1">
    <citation type="journal article" date="1994" name="Plant J.">
        <title>Identification of an Arabidopsis thaliana gene encoding a plasma membrane H(+)-ATPase whose expression is restricted to anther tissue.</title>
        <authorList>
            <person name="Houlne G."/>
            <person name="Boutry M."/>
        </authorList>
    </citation>
    <scope>NUCLEOTIDE SEQUENCE [GENOMIC DNA]</scope>
    <source>
        <strain>cv. Columbia</strain>
    </source>
</reference>
<reference key="2">
    <citation type="submission" date="1996-05" db="EMBL/GenBank/DDBJ databases">
        <title>A 37.5 Kb sequence from Arabidopsis thaliana chromosome I.</title>
        <authorList>
            <person name="Goodman H.M."/>
            <person name="Gallant P."/>
            <person name="Keifer-Higgins S."/>
            <person name="Rubenfield M."/>
            <person name="Church G.M."/>
        </authorList>
    </citation>
    <scope>NUCLEOTIDE SEQUENCE [GENOMIC DNA]</scope>
    <source>
        <strain>cv. Columbia</strain>
    </source>
</reference>
<reference key="3">
    <citation type="journal article" date="2000" name="Nature">
        <title>Sequence and analysis of chromosome 1 of the plant Arabidopsis thaliana.</title>
        <authorList>
            <person name="Theologis A."/>
            <person name="Ecker J.R."/>
            <person name="Palm C.J."/>
            <person name="Federspiel N.A."/>
            <person name="Kaul S."/>
            <person name="White O."/>
            <person name="Alonso J."/>
            <person name="Altafi H."/>
            <person name="Araujo R."/>
            <person name="Bowman C.L."/>
            <person name="Brooks S.Y."/>
            <person name="Buehler E."/>
            <person name="Chan A."/>
            <person name="Chao Q."/>
            <person name="Chen H."/>
            <person name="Cheuk R.F."/>
            <person name="Chin C.W."/>
            <person name="Chung M.K."/>
            <person name="Conn L."/>
            <person name="Conway A.B."/>
            <person name="Conway A.R."/>
            <person name="Creasy T.H."/>
            <person name="Dewar K."/>
            <person name="Dunn P."/>
            <person name="Etgu P."/>
            <person name="Feldblyum T.V."/>
            <person name="Feng J.-D."/>
            <person name="Fong B."/>
            <person name="Fujii C.Y."/>
            <person name="Gill J.E."/>
            <person name="Goldsmith A.D."/>
            <person name="Haas B."/>
            <person name="Hansen N.F."/>
            <person name="Hughes B."/>
            <person name="Huizar L."/>
            <person name="Hunter J.L."/>
            <person name="Jenkins J."/>
            <person name="Johnson-Hopson C."/>
            <person name="Khan S."/>
            <person name="Khaykin E."/>
            <person name="Kim C.J."/>
            <person name="Koo H.L."/>
            <person name="Kremenetskaia I."/>
            <person name="Kurtz D.B."/>
            <person name="Kwan A."/>
            <person name="Lam B."/>
            <person name="Langin-Hooper S."/>
            <person name="Lee A."/>
            <person name="Lee J.M."/>
            <person name="Lenz C.A."/>
            <person name="Li J.H."/>
            <person name="Li Y.-P."/>
            <person name="Lin X."/>
            <person name="Liu S.X."/>
            <person name="Liu Z.A."/>
            <person name="Luros J.S."/>
            <person name="Maiti R."/>
            <person name="Marziali A."/>
            <person name="Militscher J."/>
            <person name="Miranda M."/>
            <person name="Nguyen M."/>
            <person name="Nierman W.C."/>
            <person name="Osborne B.I."/>
            <person name="Pai G."/>
            <person name="Peterson J."/>
            <person name="Pham P.K."/>
            <person name="Rizzo M."/>
            <person name="Rooney T."/>
            <person name="Rowley D."/>
            <person name="Sakano H."/>
            <person name="Salzberg S.L."/>
            <person name="Schwartz J.R."/>
            <person name="Shinn P."/>
            <person name="Southwick A.M."/>
            <person name="Sun H."/>
            <person name="Tallon L.J."/>
            <person name="Tambunga G."/>
            <person name="Toriumi M.J."/>
            <person name="Town C.D."/>
            <person name="Utterback T."/>
            <person name="Van Aken S."/>
            <person name="Vaysberg M."/>
            <person name="Vysotskaia V.S."/>
            <person name="Walker M."/>
            <person name="Wu D."/>
            <person name="Yu G."/>
            <person name="Fraser C.M."/>
            <person name="Venter J.C."/>
            <person name="Davis R.W."/>
        </authorList>
    </citation>
    <scope>NUCLEOTIDE SEQUENCE [LARGE SCALE GENOMIC DNA]</scope>
    <source>
        <strain>cv. Columbia</strain>
    </source>
</reference>
<reference key="4">
    <citation type="journal article" date="2017" name="Plant J.">
        <title>Araport11: a complete reannotation of the Arabidopsis thaliana reference genome.</title>
        <authorList>
            <person name="Cheng C.Y."/>
            <person name="Krishnakumar V."/>
            <person name="Chan A.P."/>
            <person name="Thibaud-Nissen F."/>
            <person name="Schobel S."/>
            <person name="Town C.D."/>
        </authorList>
    </citation>
    <scope>GENOME REANNOTATION</scope>
    <source>
        <strain>cv. Columbia</strain>
    </source>
</reference>
<reference key="5">
    <citation type="journal article" date="2005" name="Plant Cell Physiol.">
        <title>Biochemical characterization of plasma membrane H+-ATPase activation in guard cell protoplasts of Arabidopsis thaliana in response to blue light.</title>
        <authorList>
            <person name="Ueno K."/>
            <person name="Kinoshita T."/>
            <person name="Inoue S."/>
            <person name="Emi T."/>
            <person name="Shimazaki K."/>
        </authorList>
    </citation>
    <scope>TISSUE SPECIFICITY</scope>
    <source>
        <strain>cv. Columbia GL1</strain>
    </source>
</reference>
<feature type="chain" id="PRO_0000046282" description="ATPase 9, plasma membrane-type">
    <location>
        <begin position="1"/>
        <end position="954"/>
    </location>
</feature>
<feature type="topological domain" description="Cytoplasmic" evidence="4">
    <location>
        <begin position="1"/>
        <end position="66"/>
    </location>
</feature>
<feature type="transmembrane region" description="Helical; Name=1" evidence="4">
    <location>
        <begin position="67"/>
        <end position="86"/>
    </location>
</feature>
<feature type="topological domain" description="Extracellular" evidence="4">
    <location>
        <begin position="87"/>
        <end position="98"/>
    </location>
</feature>
<feature type="transmembrane region" description="Helical; Name=2" evidence="4">
    <location>
        <begin position="99"/>
        <end position="119"/>
    </location>
</feature>
<feature type="topological domain" description="Cytoplasmic" evidence="4">
    <location>
        <begin position="120"/>
        <end position="248"/>
    </location>
</feature>
<feature type="transmembrane region" description="Helical; Name=3" evidence="4">
    <location>
        <begin position="249"/>
        <end position="269"/>
    </location>
</feature>
<feature type="topological domain" description="Extracellular" evidence="4">
    <location>
        <begin position="270"/>
        <end position="278"/>
    </location>
</feature>
<feature type="transmembrane region" description="Helical; Name=4" evidence="4">
    <location>
        <begin position="279"/>
        <end position="296"/>
    </location>
</feature>
<feature type="topological domain" description="Cytoplasmic" evidence="4">
    <location>
        <begin position="297"/>
        <end position="648"/>
    </location>
</feature>
<feature type="transmembrane region" description="Helical; Name=5" evidence="4">
    <location>
        <begin position="649"/>
        <end position="670"/>
    </location>
</feature>
<feature type="topological domain" description="Extracellular" evidence="4">
    <location>
        <begin position="671"/>
        <end position="675"/>
    </location>
</feature>
<feature type="transmembrane region" description="Helical; Name=6" evidence="4">
    <location>
        <begin position="676"/>
        <end position="698"/>
    </location>
</feature>
<feature type="topological domain" description="Cytoplasmic" evidence="4">
    <location>
        <begin position="699"/>
        <end position="714"/>
    </location>
</feature>
<feature type="transmembrane region" description="Helical; Name=7" evidence="4">
    <location>
        <begin position="715"/>
        <end position="735"/>
    </location>
</feature>
<feature type="topological domain" description="Extracellular" evidence="4">
    <location>
        <begin position="736"/>
        <end position="756"/>
    </location>
</feature>
<feature type="transmembrane region" description="Helical; Name=8" evidence="4">
    <location>
        <begin position="757"/>
        <end position="777"/>
    </location>
</feature>
<feature type="topological domain" description="Cytoplasmic" evidence="4">
    <location>
        <begin position="778"/>
        <end position="789"/>
    </location>
</feature>
<feature type="transmembrane region" description="Helical; Name=9" evidence="4">
    <location>
        <begin position="790"/>
        <end position="810"/>
    </location>
</feature>
<feature type="topological domain" description="Extracellular" evidence="4">
    <location>
        <begin position="811"/>
        <end position="818"/>
    </location>
</feature>
<feature type="transmembrane region" description="Helical; Name=10" evidence="4">
    <location>
        <begin position="819"/>
        <end position="839"/>
    </location>
</feature>
<feature type="topological domain" description="Cytoplasmic" evidence="4">
    <location>
        <begin position="840"/>
        <end position="954"/>
    </location>
</feature>
<feature type="region of interest" description="Interaction with 14-3-3 proteins" evidence="1">
    <location>
        <begin position="952"/>
        <end position="954"/>
    </location>
</feature>
<feature type="active site" description="4-aspartylphosphate intermediate" evidence="1">
    <location>
        <position position="334"/>
    </location>
</feature>
<feature type="binding site" evidence="1">
    <location>
        <position position="593"/>
    </location>
    <ligand>
        <name>Mg(2+)</name>
        <dbReference type="ChEBI" id="CHEBI:18420"/>
    </ligand>
</feature>
<feature type="binding site" evidence="1">
    <location>
        <position position="597"/>
    </location>
    <ligand>
        <name>Mg(2+)</name>
        <dbReference type="ChEBI" id="CHEBI:18420"/>
    </ligand>
</feature>
<feature type="modified residue" description="Phosphothreonine" evidence="3">
    <location>
        <position position="886"/>
    </location>
</feature>
<feature type="modified residue" description="Phosphoserine" evidence="2">
    <location>
        <position position="936"/>
    </location>
</feature>
<feature type="modified residue" description="Phosphothreonine" evidence="3">
    <location>
        <position position="953"/>
    </location>
</feature>
<proteinExistence type="evidence at transcript level"/>
<organism>
    <name type="scientific">Arabidopsis thaliana</name>
    <name type="common">Mouse-ear cress</name>
    <dbReference type="NCBI Taxonomy" id="3702"/>
    <lineage>
        <taxon>Eukaryota</taxon>
        <taxon>Viridiplantae</taxon>
        <taxon>Streptophyta</taxon>
        <taxon>Embryophyta</taxon>
        <taxon>Tracheophyta</taxon>
        <taxon>Spermatophyta</taxon>
        <taxon>Magnoliopsida</taxon>
        <taxon>eudicotyledons</taxon>
        <taxon>Gunneridae</taxon>
        <taxon>Pentapetalae</taxon>
        <taxon>rosids</taxon>
        <taxon>malvids</taxon>
        <taxon>Brassicales</taxon>
        <taxon>Brassicaceae</taxon>
        <taxon>Camelineae</taxon>
        <taxon>Arabidopsis</taxon>
    </lineage>
</organism>
<protein>
    <recommendedName>
        <fullName>ATPase 9, plasma membrane-type</fullName>
        <ecNumber>7.1.2.1</ecNumber>
    </recommendedName>
    <alternativeName>
        <fullName>Proton pump 9</fullName>
    </alternativeName>
</protein>
<dbReference type="EC" id="7.1.2.1"/>
<dbReference type="EMBL" id="X73676">
    <property type="status" value="NOT_ANNOTATED_CDS"/>
    <property type="molecule type" value="Genomic_DNA"/>
</dbReference>
<dbReference type="EMBL" id="U53501">
    <property type="protein sequence ID" value="AAA98916.1"/>
    <property type="status" value="ALT_SEQ"/>
    <property type="molecule type" value="Genomic_DNA"/>
</dbReference>
<dbReference type="EMBL" id="AC011713">
    <property type="protein sequence ID" value="AAF14653.1"/>
    <property type="molecule type" value="Genomic_DNA"/>
</dbReference>
<dbReference type="EMBL" id="AC018849">
    <property type="protein sequence ID" value="AAF27113.1"/>
    <property type="molecule type" value="Genomic_DNA"/>
</dbReference>
<dbReference type="EMBL" id="CP002684">
    <property type="protein sequence ID" value="AEE36433.1"/>
    <property type="molecule type" value="Genomic_DNA"/>
</dbReference>
<dbReference type="PIR" id="H96838">
    <property type="entry name" value="H96838"/>
</dbReference>
<dbReference type="PIR" id="S60301">
    <property type="entry name" value="S60301"/>
</dbReference>
<dbReference type="RefSeq" id="NP_178181.1">
    <molecule id="Q42556-1"/>
    <property type="nucleotide sequence ID" value="NM_106714.2"/>
</dbReference>
<dbReference type="SMR" id="Q42556"/>
<dbReference type="BioGRID" id="29623">
    <property type="interactions" value="2"/>
</dbReference>
<dbReference type="FunCoup" id="Q42556">
    <property type="interactions" value="145"/>
</dbReference>
<dbReference type="STRING" id="3702.Q42556"/>
<dbReference type="iPTMnet" id="Q42556"/>
<dbReference type="PaxDb" id="3702-AT1G80660.1"/>
<dbReference type="EnsemblPlants" id="AT1G80660.1">
    <molecule id="Q42556-1"/>
    <property type="protein sequence ID" value="AT1G80660.1"/>
    <property type="gene ID" value="AT1G80660"/>
</dbReference>
<dbReference type="GeneID" id="844405"/>
<dbReference type="Gramene" id="AT1G80660.1">
    <molecule id="Q42556-1"/>
    <property type="protein sequence ID" value="AT1G80660.1"/>
    <property type="gene ID" value="AT1G80660"/>
</dbReference>
<dbReference type="KEGG" id="ath:AT1G80660"/>
<dbReference type="Araport" id="AT1G80660"/>
<dbReference type="TAIR" id="AT1G80660">
    <property type="gene designation" value="HA9"/>
</dbReference>
<dbReference type="eggNOG" id="KOG0205">
    <property type="taxonomic scope" value="Eukaryota"/>
</dbReference>
<dbReference type="InParanoid" id="Q42556"/>
<dbReference type="PhylomeDB" id="Q42556"/>
<dbReference type="BioCyc" id="ARA:AT1G80660-MONOMER"/>
<dbReference type="CD-CODE" id="4299E36E">
    <property type="entry name" value="Nucleolus"/>
</dbReference>
<dbReference type="PRO" id="PR:Q42556"/>
<dbReference type="Proteomes" id="UP000006548">
    <property type="component" value="Chromosome 1"/>
</dbReference>
<dbReference type="ExpressionAtlas" id="Q42556">
    <property type="expression patterns" value="baseline and differential"/>
</dbReference>
<dbReference type="GO" id="GO:0005739">
    <property type="term" value="C:mitochondrion"/>
    <property type="evidence" value="ECO:0007005"/>
    <property type="project" value="TAIR"/>
</dbReference>
<dbReference type="GO" id="GO:0000325">
    <property type="term" value="C:plant-type vacuole"/>
    <property type="evidence" value="ECO:0007005"/>
    <property type="project" value="TAIR"/>
</dbReference>
<dbReference type="GO" id="GO:0005886">
    <property type="term" value="C:plasma membrane"/>
    <property type="evidence" value="ECO:0000250"/>
    <property type="project" value="TAIR"/>
</dbReference>
<dbReference type="GO" id="GO:0005524">
    <property type="term" value="F:ATP binding"/>
    <property type="evidence" value="ECO:0007669"/>
    <property type="project" value="UniProtKB-KW"/>
</dbReference>
<dbReference type="GO" id="GO:0016887">
    <property type="term" value="F:ATP hydrolysis activity"/>
    <property type="evidence" value="ECO:0007669"/>
    <property type="project" value="InterPro"/>
</dbReference>
<dbReference type="GO" id="GO:0046872">
    <property type="term" value="F:metal ion binding"/>
    <property type="evidence" value="ECO:0007669"/>
    <property type="project" value="UniProtKB-KW"/>
</dbReference>
<dbReference type="GO" id="GO:0003729">
    <property type="term" value="F:mRNA binding"/>
    <property type="evidence" value="ECO:0000314"/>
    <property type="project" value="TAIR"/>
</dbReference>
<dbReference type="GO" id="GO:0008553">
    <property type="term" value="F:P-type proton-exporting transporter activity"/>
    <property type="evidence" value="ECO:0000250"/>
    <property type="project" value="TAIR"/>
</dbReference>
<dbReference type="GO" id="GO:0120029">
    <property type="term" value="P:proton export across plasma membrane"/>
    <property type="evidence" value="ECO:0007669"/>
    <property type="project" value="InterPro"/>
</dbReference>
<dbReference type="CDD" id="cd02076">
    <property type="entry name" value="P-type_ATPase_H"/>
    <property type="match status" value="1"/>
</dbReference>
<dbReference type="FunFam" id="1.20.1110.10:FF:000045">
    <property type="entry name" value="ATPase 4 plasma membrane-type"/>
    <property type="match status" value="1"/>
</dbReference>
<dbReference type="FunFam" id="2.70.150.10:FF:000004">
    <property type="entry name" value="Plasma membrane ATPase"/>
    <property type="match status" value="1"/>
</dbReference>
<dbReference type="FunFam" id="3.40.1110.10:FF:000004">
    <property type="entry name" value="Plasma membrane ATPase"/>
    <property type="match status" value="1"/>
</dbReference>
<dbReference type="FunFam" id="3.40.50.1000:FF:000211">
    <property type="entry name" value="Plasma membrane ATPase"/>
    <property type="match status" value="1"/>
</dbReference>
<dbReference type="Gene3D" id="6.10.140.890">
    <property type="match status" value="1"/>
</dbReference>
<dbReference type="Gene3D" id="3.40.1110.10">
    <property type="entry name" value="Calcium-transporting ATPase, cytoplasmic domain N"/>
    <property type="match status" value="1"/>
</dbReference>
<dbReference type="Gene3D" id="2.70.150.10">
    <property type="entry name" value="Calcium-transporting ATPase, cytoplasmic transduction domain A"/>
    <property type="match status" value="1"/>
</dbReference>
<dbReference type="Gene3D" id="1.20.1110.10">
    <property type="entry name" value="Calcium-transporting ATPase, transmembrane domain"/>
    <property type="match status" value="1"/>
</dbReference>
<dbReference type="Gene3D" id="3.40.50.1000">
    <property type="entry name" value="HAD superfamily/HAD-like"/>
    <property type="match status" value="1"/>
</dbReference>
<dbReference type="InterPro" id="IPR004014">
    <property type="entry name" value="ATPase_P-typ_cation-transptr_N"/>
</dbReference>
<dbReference type="InterPro" id="IPR023299">
    <property type="entry name" value="ATPase_P-typ_cyto_dom_N"/>
</dbReference>
<dbReference type="InterPro" id="IPR018303">
    <property type="entry name" value="ATPase_P-typ_P_site"/>
</dbReference>
<dbReference type="InterPro" id="IPR023298">
    <property type="entry name" value="ATPase_P-typ_TM_dom_sf"/>
</dbReference>
<dbReference type="InterPro" id="IPR008250">
    <property type="entry name" value="ATPase_P-typ_transduc_dom_A_sf"/>
</dbReference>
<dbReference type="InterPro" id="IPR036412">
    <property type="entry name" value="HAD-like_sf"/>
</dbReference>
<dbReference type="InterPro" id="IPR023214">
    <property type="entry name" value="HAD_sf"/>
</dbReference>
<dbReference type="InterPro" id="IPR006534">
    <property type="entry name" value="P-type_ATPase_IIIA"/>
</dbReference>
<dbReference type="InterPro" id="IPR001757">
    <property type="entry name" value="P_typ_ATPase"/>
</dbReference>
<dbReference type="InterPro" id="IPR044492">
    <property type="entry name" value="P_typ_ATPase_HD_dom"/>
</dbReference>
<dbReference type="NCBIfam" id="TIGR01647">
    <property type="entry name" value="ATPase-IIIA_H"/>
    <property type="match status" value="1"/>
</dbReference>
<dbReference type="NCBIfam" id="TIGR01494">
    <property type="entry name" value="ATPase_P-type"/>
    <property type="match status" value="2"/>
</dbReference>
<dbReference type="PANTHER" id="PTHR42861">
    <property type="entry name" value="CALCIUM-TRANSPORTING ATPASE"/>
    <property type="match status" value="1"/>
</dbReference>
<dbReference type="Pfam" id="PF00690">
    <property type="entry name" value="Cation_ATPase_N"/>
    <property type="match status" value="1"/>
</dbReference>
<dbReference type="Pfam" id="PF00122">
    <property type="entry name" value="E1-E2_ATPase"/>
    <property type="match status" value="1"/>
</dbReference>
<dbReference type="Pfam" id="PF00702">
    <property type="entry name" value="Hydrolase"/>
    <property type="match status" value="1"/>
</dbReference>
<dbReference type="PRINTS" id="PR00119">
    <property type="entry name" value="CATATPASE"/>
</dbReference>
<dbReference type="PRINTS" id="PR00120">
    <property type="entry name" value="HATPASE"/>
</dbReference>
<dbReference type="SFLD" id="SFLDS00003">
    <property type="entry name" value="Haloacid_Dehalogenase"/>
    <property type="match status" value="1"/>
</dbReference>
<dbReference type="SFLD" id="SFLDF00027">
    <property type="entry name" value="p-type_atpase"/>
    <property type="match status" value="1"/>
</dbReference>
<dbReference type="SMART" id="SM00831">
    <property type="entry name" value="Cation_ATPase_N"/>
    <property type="match status" value="1"/>
</dbReference>
<dbReference type="SUPFAM" id="SSF81653">
    <property type="entry name" value="Calcium ATPase, transduction domain A"/>
    <property type="match status" value="1"/>
</dbReference>
<dbReference type="SUPFAM" id="SSF81665">
    <property type="entry name" value="Calcium ATPase, transmembrane domain M"/>
    <property type="match status" value="1"/>
</dbReference>
<dbReference type="SUPFAM" id="SSF56784">
    <property type="entry name" value="HAD-like"/>
    <property type="match status" value="1"/>
</dbReference>
<dbReference type="PROSITE" id="PS00154">
    <property type="entry name" value="ATPASE_E1_E2"/>
    <property type="match status" value="1"/>
</dbReference>
<accession>Q42556</accession>
<accession>Q9M8N3</accession>
<accession>Q9SAJ1</accession>
<comment type="function">
    <text>The plasma membrane H(+) ATPase of plants and fungi generates a proton gradient that drives the active transport of nutrients by H(+)-symport. The resulting external acidification and/or internal alkinization may mediate growth responses.</text>
</comment>
<comment type="catalytic activity">
    <reaction>
        <text>ATP + H2O + H(+)(in) = ADP + phosphate + 2 H(+)(out)</text>
        <dbReference type="Rhea" id="RHEA:20852"/>
        <dbReference type="ChEBI" id="CHEBI:15377"/>
        <dbReference type="ChEBI" id="CHEBI:15378"/>
        <dbReference type="ChEBI" id="CHEBI:30616"/>
        <dbReference type="ChEBI" id="CHEBI:43474"/>
        <dbReference type="ChEBI" id="CHEBI:456216"/>
        <dbReference type="EC" id="7.1.2.1"/>
    </reaction>
</comment>
<comment type="subunit">
    <text evidence="1">Binds to 14-3-3 proteins. The binding is induced by phosphorylation of Thr-953. Binding to 14-3-3 proteins activates the H(+)-ATPase (By similarity).</text>
</comment>
<comment type="subcellular location">
    <subcellularLocation>
        <location>Membrane</location>
        <topology>Multi-pass membrane protein</topology>
    </subcellularLocation>
</comment>
<comment type="alternative products">
    <event type="alternative splicing"/>
    <isoform>
        <id>Q42556-1</id>
        <name>1</name>
        <sequence type="displayed"/>
    </isoform>
    <text>A number of isoforms are produced. According to EST sequences.</text>
</comment>
<comment type="tissue specificity">
    <text evidence="5">Anther specific. Expressed in guard cells (PubMed:15821287).</text>
</comment>
<comment type="similarity">
    <text evidence="6">Belongs to the cation transport ATPase (P-type) (TC 3.A.3) family. Type IIIA subfamily.</text>
</comment>
<comment type="sequence caution" evidence="6">
    <conflict type="erroneous gene model prediction">
        <sequence resource="EMBL-CDS" id="AAA98916"/>
    </conflict>
</comment>